<evidence type="ECO:0000250" key="1">
    <source>
        <dbReference type="UniProtKB" id="P62841"/>
    </source>
</evidence>
<evidence type="ECO:0000305" key="2"/>
<keyword id="KW-0007">Acetylation</keyword>
<keyword id="KW-0963">Cytoplasm</keyword>
<keyword id="KW-1017">Isopeptide bond</keyword>
<keyword id="KW-1185">Reference proteome</keyword>
<keyword id="KW-0687">Ribonucleoprotein</keyword>
<keyword id="KW-0689">Ribosomal protein</keyword>
<keyword id="KW-0832">Ubl conjugation</keyword>
<name>RS15_MESAU</name>
<protein>
    <recommendedName>
        <fullName evidence="2">Small ribosomal subunit protein uS19</fullName>
    </recommendedName>
    <alternativeName>
        <fullName>40S ribosomal protein S15</fullName>
    </alternativeName>
    <alternativeName>
        <fullName>RIG protein</fullName>
    </alternativeName>
</protein>
<dbReference type="EMBL" id="J02983">
    <property type="protein sequence ID" value="AAA37094.1"/>
    <property type="molecule type" value="mRNA"/>
</dbReference>
<dbReference type="PIR" id="B33885">
    <property type="entry name" value="R3HY15"/>
</dbReference>
<dbReference type="RefSeq" id="NP_001268540.1">
    <property type="nucleotide sequence ID" value="NM_001281611.1"/>
</dbReference>
<dbReference type="SMR" id="P62842"/>
<dbReference type="STRING" id="10036.ENSMAUP00000003960"/>
<dbReference type="Ensembl" id="ENSMAUT00000005819">
    <property type="protein sequence ID" value="ENSMAUP00000003955"/>
    <property type="gene ID" value="ENSMAUG00000004679"/>
</dbReference>
<dbReference type="GeneID" id="101832829"/>
<dbReference type="KEGG" id="maua:101832829"/>
<dbReference type="CTD" id="6209"/>
<dbReference type="eggNOG" id="KOG0898">
    <property type="taxonomic scope" value="Eukaryota"/>
</dbReference>
<dbReference type="OrthoDB" id="10258210at2759"/>
<dbReference type="Proteomes" id="UP000189706">
    <property type="component" value="Unplaced"/>
</dbReference>
<dbReference type="GO" id="GO:0022627">
    <property type="term" value="C:cytosolic small ribosomal subunit"/>
    <property type="evidence" value="ECO:0007669"/>
    <property type="project" value="TreeGrafter"/>
</dbReference>
<dbReference type="GO" id="GO:0003723">
    <property type="term" value="F:RNA binding"/>
    <property type="evidence" value="ECO:0007669"/>
    <property type="project" value="InterPro"/>
</dbReference>
<dbReference type="GO" id="GO:0003735">
    <property type="term" value="F:structural constituent of ribosome"/>
    <property type="evidence" value="ECO:0007669"/>
    <property type="project" value="InterPro"/>
</dbReference>
<dbReference type="GO" id="GO:0000028">
    <property type="term" value="P:ribosomal small subunit assembly"/>
    <property type="evidence" value="ECO:0007669"/>
    <property type="project" value="TreeGrafter"/>
</dbReference>
<dbReference type="GO" id="GO:0006412">
    <property type="term" value="P:translation"/>
    <property type="evidence" value="ECO:0007669"/>
    <property type="project" value="InterPro"/>
</dbReference>
<dbReference type="FunFam" id="3.30.860.10:FF:000002">
    <property type="entry name" value="40S ribosomal protein S15"/>
    <property type="match status" value="1"/>
</dbReference>
<dbReference type="Gene3D" id="3.30.860.10">
    <property type="entry name" value="30s Ribosomal Protein S19, Chain A"/>
    <property type="match status" value="1"/>
</dbReference>
<dbReference type="HAMAP" id="MF_00531">
    <property type="entry name" value="Ribosomal_uS19"/>
    <property type="match status" value="1"/>
</dbReference>
<dbReference type="InterPro" id="IPR002222">
    <property type="entry name" value="Ribosomal_uS19"/>
</dbReference>
<dbReference type="InterPro" id="IPR020934">
    <property type="entry name" value="Ribosomal_uS19_CS"/>
</dbReference>
<dbReference type="InterPro" id="IPR005713">
    <property type="entry name" value="Ribosomal_uS19_euk/arc"/>
</dbReference>
<dbReference type="InterPro" id="IPR023575">
    <property type="entry name" value="Ribosomal_uS19_SF"/>
</dbReference>
<dbReference type="NCBIfam" id="NF003121">
    <property type="entry name" value="PRK04038.1"/>
    <property type="match status" value="1"/>
</dbReference>
<dbReference type="NCBIfam" id="TIGR01025">
    <property type="entry name" value="uS19_arch"/>
    <property type="match status" value="1"/>
</dbReference>
<dbReference type="PANTHER" id="PTHR11880">
    <property type="entry name" value="RIBOSOMAL PROTEIN S19P FAMILY MEMBER"/>
    <property type="match status" value="1"/>
</dbReference>
<dbReference type="PANTHER" id="PTHR11880:SF2">
    <property type="entry name" value="SMALL RIBOSOMAL SUBUNIT PROTEIN US19"/>
    <property type="match status" value="1"/>
</dbReference>
<dbReference type="Pfam" id="PF00203">
    <property type="entry name" value="Ribosomal_S19"/>
    <property type="match status" value="1"/>
</dbReference>
<dbReference type="PIRSF" id="PIRSF002144">
    <property type="entry name" value="Ribosomal_S19"/>
    <property type="match status" value="1"/>
</dbReference>
<dbReference type="PRINTS" id="PR00975">
    <property type="entry name" value="RIBOSOMALS19"/>
</dbReference>
<dbReference type="SUPFAM" id="SSF54570">
    <property type="entry name" value="Ribosomal protein S19"/>
    <property type="match status" value="1"/>
</dbReference>
<dbReference type="PROSITE" id="PS00323">
    <property type="entry name" value="RIBOSOMAL_S19"/>
    <property type="match status" value="1"/>
</dbReference>
<sequence>MAEVEQKKKRTFRKFTYRGVDLDQLLDMSYEQLMQLYSARQRRRLNRGLRRKQHSLLKRLRKAKKEAPPMEKPEVVKTHLRDMIILPEMVGSMVGVYNGKTFNQVEIKPEMIGHYLGEFSITYKPVKHGRPGIGATHSSRFIPLK</sequence>
<accession>P62842</accession>
<accession>P11174</accession>
<feature type="initiator methionine" description="Removed" evidence="1">
    <location>
        <position position="1"/>
    </location>
</feature>
<feature type="chain" id="PRO_0000130028" description="Small ribosomal subunit protein uS19">
    <location>
        <begin position="2"/>
        <end position="145"/>
    </location>
</feature>
<feature type="modified residue" description="N-acetylalanine" evidence="1">
    <location>
        <position position="2"/>
    </location>
</feature>
<feature type="cross-link" description="Glycyl lysine isopeptide (Lys-Gly) (interchain with G-Cter in SUMO2)" evidence="1">
    <location>
        <position position="108"/>
    </location>
</feature>
<reference key="1">
    <citation type="journal article" date="1987" name="Proc. Natl. Acad. Sci. U.S.A.">
        <title>Evolutionary conservation of the insulinoma gene rig and its possible function.</title>
        <authorList>
            <person name="Inoue C."/>
            <person name="Shiga K."/>
            <person name="Takasawa S."/>
            <person name="Kitagawa M."/>
            <person name="Yamamoto H."/>
            <person name="Okamoto H."/>
        </authorList>
    </citation>
    <scope>NUCLEOTIDE SEQUENCE [MRNA]</scope>
</reference>
<proteinExistence type="evidence at transcript level"/>
<gene>
    <name type="primary">RPS15</name>
    <name type="synonym">RIG</name>
</gene>
<comment type="function">
    <text evidence="1">Component of the small ribosomal subunit. The ribosome is a large ribonucleoprotein complex responsible for the synthesis of proteins in the cell.</text>
</comment>
<comment type="subunit">
    <text evidence="1">Component of the small ribosomal subunit.</text>
</comment>
<comment type="subcellular location">
    <subcellularLocation>
        <location evidence="1">Cytoplasm</location>
    </subcellularLocation>
</comment>
<comment type="similarity">
    <text evidence="2">Belongs to the universal ribosomal protein uS19 family.</text>
</comment>
<organism>
    <name type="scientific">Mesocricetus auratus</name>
    <name type="common">Golden hamster</name>
    <dbReference type="NCBI Taxonomy" id="10036"/>
    <lineage>
        <taxon>Eukaryota</taxon>
        <taxon>Metazoa</taxon>
        <taxon>Chordata</taxon>
        <taxon>Craniata</taxon>
        <taxon>Vertebrata</taxon>
        <taxon>Euteleostomi</taxon>
        <taxon>Mammalia</taxon>
        <taxon>Eutheria</taxon>
        <taxon>Euarchontoglires</taxon>
        <taxon>Glires</taxon>
        <taxon>Rodentia</taxon>
        <taxon>Myomorpha</taxon>
        <taxon>Muroidea</taxon>
        <taxon>Cricetidae</taxon>
        <taxon>Cricetinae</taxon>
        <taxon>Mesocricetus</taxon>
    </lineage>
</organism>